<keyword id="KW-0378">Hydrolase</keyword>
<keyword id="KW-0645">Protease</keyword>
<keyword id="KW-1185">Reference proteome</keyword>
<keyword id="KW-0677">Repeat</keyword>
<keyword id="KW-0788">Thiol protease</keyword>
<organism>
    <name type="scientific">Rattus norvegicus</name>
    <name type="common">Rat</name>
    <dbReference type="NCBI Taxonomy" id="10116"/>
    <lineage>
        <taxon>Eukaryota</taxon>
        <taxon>Metazoa</taxon>
        <taxon>Chordata</taxon>
        <taxon>Craniata</taxon>
        <taxon>Vertebrata</taxon>
        <taxon>Euteleostomi</taxon>
        <taxon>Mammalia</taxon>
        <taxon>Eutheria</taxon>
        <taxon>Euarchontoglires</taxon>
        <taxon>Glires</taxon>
        <taxon>Rodentia</taxon>
        <taxon>Myomorpha</taxon>
        <taxon>Muroidea</taxon>
        <taxon>Muridae</taxon>
        <taxon>Murinae</taxon>
        <taxon>Rattus</taxon>
    </lineage>
</organism>
<dbReference type="EC" id="3.4.22.-"/>
<dbReference type="EMBL" id="BC091250">
    <property type="protein sequence ID" value="AAH91250.1"/>
    <property type="molecule type" value="mRNA"/>
</dbReference>
<dbReference type="RefSeq" id="NP_001020304.1">
    <property type="nucleotide sequence ID" value="NM_001025133.1"/>
</dbReference>
<dbReference type="RefSeq" id="XP_006239839.1">
    <property type="nucleotide sequence ID" value="XM_006239777.3"/>
</dbReference>
<dbReference type="RefSeq" id="XP_006239840.1">
    <property type="nucleotide sequence ID" value="XM_006239778.3"/>
</dbReference>
<dbReference type="SMR" id="Q5BK10"/>
<dbReference type="FunCoup" id="Q5BK10">
    <property type="interactions" value="1"/>
</dbReference>
<dbReference type="STRING" id="10116.ENSRNOP00000039021"/>
<dbReference type="MEROPS" id="C02.020"/>
<dbReference type="PhosphoSitePlus" id="Q5BK10"/>
<dbReference type="PaxDb" id="10116-ENSRNOP00000039021"/>
<dbReference type="Ensembl" id="ENSRNOT00000047853.5">
    <property type="protein sequence ID" value="ENSRNOP00000039021.3"/>
    <property type="gene ID" value="ENSRNOG00000032375.5"/>
</dbReference>
<dbReference type="GeneID" id="362701"/>
<dbReference type="KEGG" id="rno:362701"/>
<dbReference type="UCSC" id="RGD:1562682">
    <property type="organism name" value="rat"/>
</dbReference>
<dbReference type="AGR" id="RGD:1562682"/>
<dbReference type="CTD" id="92291"/>
<dbReference type="RGD" id="1562682">
    <property type="gene designation" value="Capn13"/>
</dbReference>
<dbReference type="eggNOG" id="KOG0037">
    <property type="taxonomic scope" value="Eukaryota"/>
</dbReference>
<dbReference type="eggNOG" id="KOG0045">
    <property type="taxonomic scope" value="Eukaryota"/>
</dbReference>
<dbReference type="GeneTree" id="ENSGT00940000160921"/>
<dbReference type="HOGENOM" id="CLU_010982_0_3_1"/>
<dbReference type="InParanoid" id="Q5BK10"/>
<dbReference type="OMA" id="SCQDFQE"/>
<dbReference type="OrthoDB" id="55114at9989"/>
<dbReference type="PhylomeDB" id="Q5BK10"/>
<dbReference type="TreeFam" id="TF314748"/>
<dbReference type="Reactome" id="R-RNO-1474228">
    <property type="pathway name" value="Degradation of the extracellular matrix"/>
</dbReference>
<dbReference type="PRO" id="PR:Q5BK10"/>
<dbReference type="Proteomes" id="UP000002494">
    <property type="component" value="Chromosome 6"/>
</dbReference>
<dbReference type="Bgee" id="ENSRNOG00000032375">
    <property type="expression patterns" value="Expressed in stomach and 12 other cell types or tissues"/>
</dbReference>
<dbReference type="GO" id="GO:0005737">
    <property type="term" value="C:cytoplasm"/>
    <property type="evidence" value="ECO:0000318"/>
    <property type="project" value="GO_Central"/>
</dbReference>
<dbReference type="GO" id="GO:0005509">
    <property type="term" value="F:calcium ion binding"/>
    <property type="evidence" value="ECO:0007669"/>
    <property type="project" value="InterPro"/>
</dbReference>
<dbReference type="GO" id="GO:0004198">
    <property type="term" value="F:calcium-dependent cysteine-type endopeptidase activity"/>
    <property type="evidence" value="ECO:0000318"/>
    <property type="project" value="GO_Central"/>
</dbReference>
<dbReference type="GO" id="GO:0006508">
    <property type="term" value="P:proteolysis"/>
    <property type="evidence" value="ECO:0000318"/>
    <property type="project" value="GO_Central"/>
</dbReference>
<dbReference type="CDD" id="cd00044">
    <property type="entry name" value="CysPc"/>
    <property type="match status" value="1"/>
</dbReference>
<dbReference type="CDD" id="cd16195">
    <property type="entry name" value="EFh_PEF_CAPN13_14"/>
    <property type="match status" value="1"/>
</dbReference>
<dbReference type="FunFam" id="2.60.120.380:FF:000016">
    <property type="entry name" value="Calpain 13"/>
    <property type="match status" value="1"/>
</dbReference>
<dbReference type="FunFam" id="1.10.238.10:FF:000175">
    <property type="entry name" value="Calpain 14"/>
    <property type="match status" value="1"/>
</dbReference>
<dbReference type="FunFam" id="3.90.70.10:FF:000054">
    <property type="entry name" value="Calpain 14"/>
    <property type="match status" value="1"/>
</dbReference>
<dbReference type="Gene3D" id="2.60.120.380">
    <property type="match status" value="1"/>
</dbReference>
<dbReference type="Gene3D" id="3.90.70.10">
    <property type="entry name" value="Cysteine proteinases"/>
    <property type="match status" value="1"/>
</dbReference>
<dbReference type="Gene3D" id="1.10.238.10">
    <property type="entry name" value="EF-hand"/>
    <property type="match status" value="1"/>
</dbReference>
<dbReference type="InterPro" id="IPR022684">
    <property type="entry name" value="Calpain_cysteine_protease"/>
</dbReference>
<dbReference type="InterPro" id="IPR022682">
    <property type="entry name" value="Calpain_domain_III"/>
</dbReference>
<dbReference type="InterPro" id="IPR022683">
    <property type="entry name" value="Calpain_III"/>
</dbReference>
<dbReference type="InterPro" id="IPR036213">
    <property type="entry name" value="Calpain_III_sf"/>
</dbReference>
<dbReference type="InterPro" id="IPR054069">
    <property type="entry name" value="CAPN3/13-like_C_EFh"/>
</dbReference>
<dbReference type="InterPro" id="IPR011992">
    <property type="entry name" value="EF-hand-dom_pair"/>
</dbReference>
<dbReference type="InterPro" id="IPR002048">
    <property type="entry name" value="EF_hand_dom"/>
</dbReference>
<dbReference type="InterPro" id="IPR038765">
    <property type="entry name" value="Papain-like_cys_pep_sf"/>
</dbReference>
<dbReference type="InterPro" id="IPR000169">
    <property type="entry name" value="Pept_cys_AS"/>
</dbReference>
<dbReference type="InterPro" id="IPR001300">
    <property type="entry name" value="Peptidase_C2_calpain_cat"/>
</dbReference>
<dbReference type="PANTHER" id="PTHR10183">
    <property type="entry name" value="CALPAIN"/>
    <property type="match status" value="1"/>
</dbReference>
<dbReference type="PANTHER" id="PTHR10183:SF333">
    <property type="entry name" value="CALPAIN-13"/>
    <property type="match status" value="1"/>
</dbReference>
<dbReference type="Pfam" id="PF01067">
    <property type="entry name" value="Calpain_III"/>
    <property type="match status" value="1"/>
</dbReference>
<dbReference type="Pfam" id="PF21875">
    <property type="entry name" value="CAPN13-like_C_EFh"/>
    <property type="match status" value="1"/>
</dbReference>
<dbReference type="Pfam" id="PF00648">
    <property type="entry name" value="Peptidase_C2"/>
    <property type="match status" value="1"/>
</dbReference>
<dbReference type="PRINTS" id="PR00704">
    <property type="entry name" value="CALPAIN"/>
</dbReference>
<dbReference type="SMART" id="SM00720">
    <property type="entry name" value="calpain_III"/>
    <property type="match status" value="1"/>
</dbReference>
<dbReference type="SMART" id="SM00230">
    <property type="entry name" value="CysPc"/>
    <property type="match status" value="1"/>
</dbReference>
<dbReference type="SUPFAM" id="SSF49758">
    <property type="entry name" value="Calpain large subunit, middle domain (domain III)"/>
    <property type="match status" value="1"/>
</dbReference>
<dbReference type="SUPFAM" id="SSF54001">
    <property type="entry name" value="Cysteine proteinases"/>
    <property type="match status" value="1"/>
</dbReference>
<dbReference type="SUPFAM" id="SSF47473">
    <property type="entry name" value="EF-hand"/>
    <property type="match status" value="1"/>
</dbReference>
<dbReference type="PROSITE" id="PS50203">
    <property type="entry name" value="CALPAIN_CAT"/>
    <property type="match status" value="1"/>
</dbReference>
<dbReference type="PROSITE" id="PS50222">
    <property type="entry name" value="EF_HAND_2"/>
    <property type="match status" value="2"/>
</dbReference>
<dbReference type="PROSITE" id="PS00139">
    <property type="entry name" value="THIOL_PROTEASE_CYS"/>
    <property type="match status" value="1"/>
</dbReference>
<gene>
    <name type="primary">Capn13</name>
</gene>
<accession>Q5BK10</accession>
<reference key="1">
    <citation type="journal article" date="2004" name="Genome Res.">
        <title>The status, quality, and expansion of the NIH full-length cDNA project: the Mammalian Gene Collection (MGC).</title>
        <authorList>
            <consortium name="The MGC Project Team"/>
        </authorList>
    </citation>
    <scope>NUCLEOTIDE SEQUENCE [LARGE SCALE MRNA]</scope>
    <source>
        <tissue>Spleen</tissue>
    </source>
</reference>
<sequence length="668" mass="76939">MAHDTEALEETSVVKFKNQDFRFLRDRCLSRGQLFIDDTFPAEASSIGQKLLMGKRLPKLEWKRPQDLSFGPPHFILEGASRFDIQQGRAGDCWFLAALGSLTQNPQCLQKILMNQSFSYQYAGIFHFRFWQCGQWVEVVIDDRLPVVGNNFCFVHPRRGNQEFWPCLMEKAYAKLLGSYSQLHYGYLPDALVDLTGGVVTRINLHSSPSDLLMVVKTAVQTGSMVACATPKWLTEESEVMENGLVSQHAYTVTGAEKIQYRRGWEEIIRLWNPWGNTEWRGRWGDGSQEWWETHGSRKSQLYENKDDGEFWMSCRDFHENFSCLYICSQFPITMDPGVTPNESWRQMRFKNQVISGNTAGGDGRDIQYLFDVQEPMDGNNVIVAFTVMPQSLKTEEWPFPLQFQVFKVDSQFQKFQKRLPPAFFSQFRDAAQGIDYVTKRNFTKSFHLSPGTYVVVASAHGKEVEFLLRIFLKMPHKDRNPNSSFNLKALKGSLSENESPKSSFHRYMDQGLDIDASQLQSLLNQEYLTGPPGDTFSLDQCQSIMALMDLKVNGRLDREEFARLQSRLIHCQHVFQHIQRSQGVLRSSDLWEVIESTDFLSGVLLSKELLSLMTLRYSDSSGRLSFPSLVCFLIRLETMSKAFRNLSKDGKSIYLTEMEWMKLVMYS</sequence>
<comment type="function">
    <text evidence="1">Probable non-lysosomal thiol-protease.</text>
</comment>
<comment type="similarity">
    <text evidence="4">Belongs to the peptidase C2 family.</text>
</comment>
<comment type="caution">
    <text evidence="4">It is unlikely that this protein binds calcium as none of the 2 EF-hand domains seem to contain a canonical calcium-binding site.</text>
</comment>
<feature type="chain" id="PRO_0000259584" description="Calpain-13">
    <location>
        <begin position="1"/>
        <end position="668"/>
    </location>
</feature>
<feature type="domain" description="Calpain catalytic" evidence="2">
    <location>
        <begin position="34"/>
        <end position="331"/>
    </location>
</feature>
<feature type="domain" description="EF-hand 1" evidence="3">
    <location>
        <begin position="537"/>
        <end position="572"/>
    </location>
</feature>
<feature type="domain" description="EF-hand 2" evidence="3">
    <location>
        <begin position="635"/>
        <end position="668"/>
    </location>
</feature>
<feature type="active site" evidence="1">
    <location>
        <position position="93"/>
    </location>
</feature>
<feature type="active site" evidence="1">
    <location>
        <position position="249"/>
    </location>
</feature>
<feature type="active site" evidence="1">
    <location>
        <position position="273"/>
    </location>
</feature>
<evidence type="ECO:0000250" key="1"/>
<evidence type="ECO:0000255" key="2">
    <source>
        <dbReference type="PROSITE-ProRule" id="PRU00239"/>
    </source>
</evidence>
<evidence type="ECO:0000255" key="3">
    <source>
        <dbReference type="PROSITE-ProRule" id="PRU00448"/>
    </source>
</evidence>
<evidence type="ECO:0000305" key="4"/>
<protein>
    <recommendedName>
        <fullName>Calpain-13</fullName>
        <ecNumber>3.4.22.-</ecNumber>
    </recommendedName>
    <alternativeName>
        <fullName>Calcium-activated neutral proteinase 13</fullName>
        <shortName>CANP 13</shortName>
    </alternativeName>
</protein>
<proteinExistence type="evidence at transcript level"/>
<name>CAN13_RAT</name>